<reference key="1">
    <citation type="journal article" date="2012" name="MBio">
        <title>Comparative genome analysis of Trichophyton rubrum and related dermatophytes reveals candidate genes involved in infection.</title>
        <authorList>
            <person name="Martinez D.A."/>
            <person name="Oliver B.G."/>
            <person name="Graeser Y."/>
            <person name="Goldberg J.M."/>
            <person name="Li W."/>
            <person name="Martinez-Rossi N.M."/>
            <person name="Monod M."/>
            <person name="Shelest E."/>
            <person name="Barton R.C."/>
            <person name="Birch E."/>
            <person name="Brakhage A.A."/>
            <person name="Chen Z."/>
            <person name="Gurr S.J."/>
            <person name="Heiman D."/>
            <person name="Heitman J."/>
            <person name="Kosti I."/>
            <person name="Rossi A."/>
            <person name="Saif S."/>
            <person name="Samalova M."/>
            <person name="Saunders C.W."/>
            <person name="Shea T."/>
            <person name="Summerbell R.C."/>
            <person name="Xu J."/>
            <person name="Young S."/>
            <person name="Zeng Q."/>
            <person name="Birren B.W."/>
            <person name="Cuomo C.A."/>
            <person name="White T.C."/>
        </authorList>
    </citation>
    <scope>NUCLEOTIDE SEQUENCE [LARGE SCALE GENOMIC DNA]</scope>
    <source>
        <strain>ATCC MYA-4604 / CBS 118893</strain>
    </source>
</reference>
<organism>
    <name type="scientific">Arthroderma gypseum (strain ATCC MYA-4604 / CBS 118893)</name>
    <name type="common">Microsporum gypseum</name>
    <dbReference type="NCBI Taxonomy" id="535722"/>
    <lineage>
        <taxon>Eukaryota</taxon>
        <taxon>Fungi</taxon>
        <taxon>Dikarya</taxon>
        <taxon>Ascomycota</taxon>
        <taxon>Pezizomycotina</taxon>
        <taxon>Eurotiomycetes</taxon>
        <taxon>Eurotiomycetidae</taxon>
        <taxon>Onygenales</taxon>
        <taxon>Arthrodermataceae</taxon>
        <taxon>Nannizzia</taxon>
    </lineage>
</organism>
<feature type="chain" id="PRO_0000412130" description="Probable dipeptidyl-aminopeptidase B">
    <location>
        <begin position="1"/>
        <end position="917"/>
    </location>
</feature>
<feature type="topological domain" description="Cytoplasmic" evidence="2">
    <location>
        <begin position="1"/>
        <end position="93"/>
    </location>
</feature>
<feature type="transmembrane region" description="Helical; Signal-anchor for type II membrane protein" evidence="2">
    <location>
        <begin position="94"/>
        <end position="114"/>
    </location>
</feature>
<feature type="topological domain" description="Vacuolar" evidence="2">
    <location>
        <begin position="115"/>
        <end position="917"/>
    </location>
</feature>
<feature type="region of interest" description="Disordered" evidence="3">
    <location>
        <begin position="1"/>
        <end position="75"/>
    </location>
</feature>
<feature type="region of interest" description="Disordered" evidence="3">
    <location>
        <begin position="124"/>
        <end position="150"/>
    </location>
</feature>
<feature type="compositionally biased region" description="Low complexity" evidence="3">
    <location>
        <begin position="27"/>
        <end position="39"/>
    </location>
</feature>
<feature type="compositionally biased region" description="Polar residues" evidence="3">
    <location>
        <begin position="40"/>
        <end position="49"/>
    </location>
</feature>
<feature type="compositionally biased region" description="Basic and acidic residues" evidence="3">
    <location>
        <begin position="57"/>
        <end position="69"/>
    </location>
</feature>
<feature type="compositionally biased region" description="Polar residues" evidence="3">
    <location>
        <begin position="124"/>
        <end position="133"/>
    </location>
</feature>
<feature type="active site" description="Charge relay system" evidence="1">
    <location>
        <position position="759"/>
    </location>
</feature>
<feature type="active site" description="Charge relay system" evidence="1">
    <location>
        <position position="836"/>
    </location>
</feature>
<feature type="active site" description="Charge relay system" evidence="1">
    <location>
        <position position="869"/>
    </location>
</feature>
<feature type="glycosylation site" description="N-linked (GlcNAc...) asparagine" evidence="2">
    <location>
        <position position="206"/>
    </location>
</feature>
<feature type="glycosylation site" description="N-linked (GlcNAc...) asparagine" evidence="2">
    <location>
        <position position="302"/>
    </location>
</feature>
<feature type="glycosylation site" description="N-linked (GlcNAc...) asparagine" evidence="2">
    <location>
        <position position="354"/>
    </location>
</feature>
<feature type="glycosylation site" description="N-linked (GlcNAc...) asparagine" evidence="2">
    <location>
        <position position="818"/>
    </location>
</feature>
<comment type="function">
    <text evidence="1">Type IV dipeptidyl-peptidase which removes N-terminal dipeptides sequentially from polypeptides having unsubstituted N-termini provided that the penultimate residue is proline.</text>
</comment>
<comment type="catalytic activity">
    <reaction>
        <text>Release of an N-terminal dipeptide, Xaa-Yaa-|-Zaa-, from a polypeptide, preferentially when Yaa is Pro, provided Zaa is neither Pro nor hydroxyproline.</text>
        <dbReference type="EC" id="3.4.14.5"/>
    </reaction>
</comment>
<comment type="subcellular location">
    <subcellularLocation>
        <location evidence="1">Vacuole membrane</location>
        <topology evidence="1">Single-pass type II membrane protein</topology>
    </subcellularLocation>
    <text evidence="1">Lysosome-like vacuoles.</text>
</comment>
<comment type="similarity">
    <text evidence="4">Belongs to the peptidase S9B family.</text>
</comment>
<keyword id="KW-0031">Aminopeptidase</keyword>
<keyword id="KW-0325">Glycoprotein</keyword>
<keyword id="KW-0378">Hydrolase</keyword>
<keyword id="KW-0472">Membrane</keyword>
<keyword id="KW-0645">Protease</keyword>
<keyword id="KW-1185">Reference proteome</keyword>
<keyword id="KW-0720">Serine protease</keyword>
<keyword id="KW-0735">Signal-anchor</keyword>
<keyword id="KW-0812">Transmembrane</keyword>
<keyword id="KW-1133">Transmembrane helix</keyword>
<keyword id="KW-0926">Vacuole</keyword>
<sequence length="917" mass="103346">MTVGRRLNDEEAIPLTAKEAGSRDSIDSSSTASVSLTLVDGTNHTTAKPSKSAHKGVSRDRYADEKYRDDVEEDWEEDRYIPSNAKPSQRRTQIVFWLLVALCVGGWAVAFLFFVTSPGNTISTTPDTGSGSPDSDVIKPGSPPAGKKIPLDDVLGGAWSPTQHTISWIAGPKGEDGLLLQKSEGGTGPYLHVEDVRNIHGTQSNNKSMVLMKDSVFFVNDERISPEKVWPSPDLKTVLAMTRQKKNWRHSYTGLYWLFDVETQTAQPLDPGAPNGRIQLATWSPTSDAVAFTRDNNLYIRNLTSKTVKAITTDGGANLFYGIPDWVYEEEVFEGNSATWWSLDGKYISFLRTNETTVPEFPVDFYLSSPPDYAPKPGEEAYPYVQQIKYPKAGAPNPTVGLQFYDVEREESFSVDVKDSLNDDDRIIIEVIPGSNGRILVRETNRESYIVKVAAIDATKREGKIIRSDNIDEIDGGWVEPSHTTTYIPSDPASGRPNDGYIDTVIHEGYNHLAYFTPLENPKPKMLTTGKWEVVAAPSGVDLKNNVIYFVATKESPIDRHVYSVKLDGSELQLLKDSEKSAYYDVSFSHGAGYMLLQYQGPKIPWQKLMNSPSNTDSYTEILEENKRLAKLSNEFALPSLHYSSITVDGFKLPVVERRPPNFDETKKYPVLFHLYGGPGSQTVNKKFLVNFQTYVASTLGYIVVTVDGRGTGFNGRKFRCIVRRNLGHYEAYDQIQTAKAWGRKPYVDKTRIAIWGWSYGGFMTLKTLEQDAGETFQYGMAVAPVTDWRYYDSIYTERYMHMPQNNEEGYETASVSNSTALSQNTRFLIMHGSADDNVHFQNTLTLLDKLDIMGVHNYDMHVFPDSNHGIYFHHAYKMVHQRLSDWLVNAFNGEWVRLRDPKPTIIKRVIRRLLHR</sequence>
<name>DAPB_ARTGP</name>
<accession>E4UYL6</accession>
<gene>
    <name type="primary">DAPB</name>
    <name type="ORF">MGYG_05182</name>
</gene>
<proteinExistence type="inferred from homology"/>
<protein>
    <recommendedName>
        <fullName>Probable dipeptidyl-aminopeptidase B</fullName>
        <shortName>DPAP B</shortName>
        <ecNumber>3.4.14.5</ecNumber>
    </recommendedName>
</protein>
<evidence type="ECO:0000250" key="1"/>
<evidence type="ECO:0000255" key="2"/>
<evidence type="ECO:0000256" key="3">
    <source>
        <dbReference type="SAM" id="MobiDB-lite"/>
    </source>
</evidence>
<evidence type="ECO:0000305" key="4"/>
<dbReference type="EC" id="3.4.14.5"/>
<dbReference type="EMBL" id="DS989825">
    <property type="protein sequence ID" value="EFR02179.1"/>
    <property type="molecule type" value="Genomic_DNA"/>
</dbReference>
<dbReference type="RefSeq" id="XP_003172590.1">
    <property type="nucleotide sequence ID" value="XM_003172542.1"/>
</dbReference>
<dbReference type="SMR" id="E4UYL6"/>
<dbReference type="FunCoup" id="E4UYL6">
    <property type="interactions" value="312"/>
</dbReference>
<dbReference type="STRING" id="535722.E4UYL6"/>
<dbReference type="ESTHER" id="artgp-dapb">
    <property type="family name" value="DPP4N_Peptidase_S9"/>
</dbReference>
<dbReference type="GlyCosmos" id="E4UYL6">
    <property type="glycosylation" value="4 sites, No reported glycans"/>
</dbReference>
<dbReference type="GeneID" id="10027863"/>
<dbReference type="VEuPathDB" id="FungiDB:MGYG_05182"/>
<dbReference type="eggNOG" id="KOG2100">
    <property type="taxonomic scope" value="Eukaryota"/>
</dbReference>
<dbReference type="HOGENOM" id="CLU_006105_0_1_1"/>
<dbReference type="InParanoid" id="E4UYL6"/>
<dbReference type="OMA" id="MRTPQEN"/>
<dbReference type="OrthoDB" id="16520at2759"/>
<dbReference type="Proteomes" id="UP000002669">
    <property type="component" value="Unassembled WGS sequence"/>
</dbReference>
<dbReference type="GO" id="GO:0000329">
    <property type="term" value="C:fungal-type vacuole membrane"/>
    <property type="evidence" value="ECO:0007669"/>
    <property type="project" value="EnsemblFungi"/>
</dbReference>
<dbReference type="GO" id="GO:0005886">
    <property type="term" value="C:plasma membrane"/>
    <property type="evidence" value="ECO:0007669"/>
    <property type="project" value="TreeGrafter"/>
</dbReference>
<dbReference type="GO" id="GO:0004177">
    <property type="term" value="F:aminopeptidase activity"/>
    <property type="evidence" value="ECO:0007669"/>
    <property type="project" value="UniProtKB-KW"/>
</dbReference>
<dbReference type="GO" id="GO:0008239">
    <property type="term" value="F:dipeptidyl-peptidase activity"/>
    <property type="evidence" value="ECO:0007669"/>
    <property type="project" value="UniProtKB-EC"/>
</dbReference>
<dbReference type="GO" id="GO:0008236">
    <property type="term" value="F:serine-type peptidase activity"/>
    <property type="evidence" value="ECO:0007669"/>
    <property type="project" value="UniProtKB-KW"/>
</dbReference>
<dbReference type="GO" id="GO:0006508">
    <property type="term" value="P:proteolysis"/>
    <property type="evidence" value="ECO:0007669"/>
    <property type="project" value="UniProtKB-KW"/>
</dbReference>
<dbReference type="FunFam" id="3.40.50.1820:FF:000003">
    <property type="entry name" value="Dipeptidyl peptidase 4"/>
    <property type="match status" value="1"/>
</dbReference>
<dbReference type="Gene3D" id="3.40.50.1820">
    <property type="entry name" value="alpha/beta hydrolase"/>
    <property type="match status" value="1"/>
</dbReference>
<dbReference type="Gene3D" id="2.140.10.30">
    <property type="entry name" value="Dipeptidylpeptidase IV, N-terminal domain"/>
    <property type="match status" value="1"/>
</dbReference>
<dbReference type="InterPro" id="IPR029058">
    <property type="entry name" value="AB_hydrolase_fold"/>
</dbReference>
<dbReference type="InterPro" id="IPR001375">
    <property type="entry name" value="Peptidase_S9_cat"/>
</dbReference>
<dbReference type="InterPro" id="IPR002469">
    <property type="entry name" value="Peptidase_S9B_N"/>
</dbReference>
<dbReference type="InterPro" id="IPR050278">
    <property type="entry name" value="Serine_Prot_S9B/DPPIV"/>
</dbReference>
<dbReference type="PANTHER" id="PTHR11731:SF200">
    <property type="entry name" value="DIPEPTIDYL PEPTIDASE 10, ISOFORM B"/>
    <property type="match status" value="1"/>
</dbReference>
<dbReference type="PANTHER" id="PTHR11731">
    <property type="entry name" value="PROTEASE FAMILY S9B,C DIPEPTIDYL-PEPTIDASE IV-RELATED"/>
    <property type="match status" value="1"/>
</dbReference>
<dbReference type="Pfam" id="PF00930">
    <property type="entry name" value="DPPIV_N"/>
    <property type="match status" value="1"/>
</dbReference>
<dbReference type="Pfam" id="PF00326">
    <property type="entry name" value="Peptidase_S9"/>
    <property type="match status" value="1"/>
</dbReference>
<dbReference type="SUPFAM" id="SSF53474">
    <property type="entry name" value="alpha/beta-Hydrolases"/>
    <property type="match status" value="1"/>
</dbReference>
<dbReference type="SUPFAM" id="SSF82171">
    <property type="entry name" value="DPP6 N-terminal domain-like"/>
    <property type="match status" value="1"/>
</dbReference>